<protein>
    <recommendedName>
        <fullName evidence="1">tRNA (cytidine(56)-2'-O)-methyltransferase</fullName>
        <ecNumber evidence="1">2.1.1.206</ecNumber>
    </recommendedName>
    <alternativeName>
        <fullName evidence="1">tRNA ribose 2'-O-methyltransferase aTrm56</fullName>
    </alternativeName>
</protein>
<evidence type="ECO:0000255" key="1">
    <source>
        <dbReference type="HAMAP-Rule" id="MF_00077"/>
    </source>
</evidence>
<sequence length="181" mass="20308">MSTGRRVFVLRIGHRPVRDHRVTTHVGLVARAFGADGIFLEESVEESVIRTLRNVVENWGGDFKVLTTRDPRETVANWKKNGGIVVHLTMYGENISEELINLISGQGKDILVVVGGEKVPRWLFEEADFNVAIGNQPHSEVAALAVFLDRLFKGEELRREFPGAKLSIIPSKRGKIVVRRE</sequence>
<name>TRM56_THEPD</name>
<organism>
    <name type="scientific">Thermofilum pendens (strain DSM 2475 / Hrk 5)</name>
    <dbReference type="NCBI Taxonomy" id="368408"/>
    <lineage>
        <taxon>Archaea</taxon>
        <taxon>Thermoproteota</taxon>
        <taxon>Thermoprotei</taxon>
        <taxon>Thermofilales</taxon>
        <taxon>Thermofilaceae</taxon>
        <taxon>Thermofilum</taxon>
    </lineage>
</organism>
<reference key="1">
    <citation type="journal article" date="2008" name="J. Bacteriol.">
        <title>Genome sequence of Thermofilum pendens reveals an exceptional loss of biosynthetic pathways without genome reduction.</title>
        <authorList>
            <person name="Anderson I."/>
            <person name="Rodriguez J."/>
            <person name="Susanti D."/>
            <person name="Porat I."/>
            <person name="Reich C."/>
            <person name="Ulrich L.E."/>
            <person name="Elkins J.G."/>
            <person name="Mavromatis K."/>
            <person name="Lykidis A."/>
            <person name="Kim E."/>
            <person name="Thompson L.S."/>
            <person name="Nolan M."/>
            <person name="Land M."/>
            <person name="Copeland A."/>
            <person name="Lapidus A."/>
            <person name="Lucas S."/>
            <person name="Detter C."/>
            <person name="Zhulin I.B."/>
            <person name="Olsen G.J."/>
            <person name="Whitman W."/>
            <person name="Mukhopadhyay B."/>
            <person name="Bristow J."/>
            <person name="Kyrpides N."/>
        </authorList>
    </citation>
    <scope>NUCLEOTIDE SEQUENCE [LARGE SCALE GENOMIC DNA]</scope>
    <source>
        <strain>DSM 2475 / Hrk 5</strain>
    </source>
</reference>
<feature type="chain" id="PRO_0000365323" description="tRNA (cytidine(56)-2'-O)-methyltransferase">
    <location>
        <begin position="1"/>
        <end position="181"/>
    </location>
</feature>
<feature type="binding site" evidence="1">
    <location>
        <position position="88"/>
    </location>
    <ligand>
        <name>S-adenosyl-L-methionine</name>
        <dbReference type="ChEBI" id="CHEBI:59789"/>
    </ligand>
</feature>
<feature type="binding site" evidence="1">
    <location>
        <begin position="115"/>
        <end position="119"/>
    </location>
    <ligand>
        <name>S-adenosyl-L-methionine</name>
        <dbReference type="ChEBI" id="CHEBI:59789"/>
    </ligand>
</feature>
<feature type="binding site" evidence="1">
    <location>
        <begin position="133"/>
        <end position="140"/>
    </location>
    <ligand>
        <name>S-adenosyl-L-methionine</name>
        <dbReference type="ChEBI" id="CHEBI:59789"/>
    </ligand>
</feature>
<gene>
    <name type="ordered locus">Tpen_0709</name>
</gene>
<accession>A1RY31</accession>
<keyword id="KW-0963">Cytoplasm</keyword>
<keyword id="KW-0489">Methyltransferase</keyword>
<keyword id="KW-1185">Reference proteome</keyword>
<keyword id="KW-0949">S-adenosyl-L-methionine</keyword>
<keyword id="KW-0808">Transferase</keyword>
<keyword id="KW-0819">tRNA processing</keyword>
<dbReference type="EC" id="2.1.1.206" evidence="1"/>
<dbReference type="EMBL" id="CP000505">
    <property type="protein sequence ID" value="ABL78111.1"/>
    <property type="molecule type" value="Genomic_DNA"/>
</dbReference>
<dbReference type="RefSeq" id="WP_011752376.1">
    <property type="nucleotide sequence ID" value="NC_008698.1"/>
</dbReference>
<dbReference type="SMR" id="A1RY31"/>
<dbReference type="STRING" id="368408.Tpen_0709"/>
<dbReference type="EnsemblBacteria" id="ABL78111">
    <property type="protein sequence ID" value="ABL78111"/>
    <property type="gene ID" value="Tpen_0709"/>
</dbReference>
<dbReference type="GeneID" id="4601590"/>
<dbReference type="KEGG" id="tpe:Tpen_0709"/>
<dbReference type="eggNOG" id="arCOG01857">
    <property type="taxonomic scope" value="Archaea"/>
</dbReference>
<dbReference type="HOGENOM" id="CLU_123709_0_0_2"/>
<dbReference type="OrthoDB" id="14397at2157"/>
<dbReference type="Proteomes" id="UP000000641">
    <property type="component" value="Chromosome"/>
</dbReference>
<dbReference type="GO" id="GO:0005737">
    <property type="term" value="C:cytoplasm"/>
    <property type="evidence" value="ECO:0007669"/>
    <property type="project" value="UniProtKB-SubCell"/>
</dbReference>
<dbReference type="GO" id="GO:0106059">
    <property type="term" value="F:tRNA (cytidine(56)-2'-O)-methyltransferase activity"/>
    <property type="evidence" value="ECO:0007669"/>
    <property type="project" value="UniProtKB-EC"/>
</dbReference>
<dbReference type="GO" id="GO:0002128">
    <property type="term" value="P:tRNA nucleoside ribose methylation"/>
    <property type="evidence" value="ECO:0007669"/>
    <property type="project" value="UniProtKB-UniRule"/>
</dbReference>
<dbReference type="CDD" id="cd18083">
    <property type="entry name" value="aTrm56-like"/>
    <property type="match status" value="1"/>
</dbReference>
<dbReference type="Gene3D" id="3.40.1280.10">
    <property type="match status" value="1"/>
</dbReference>
<dbReference type="HAMAP" id="MF_00077">
    <property type="entry name" value="tRNA_methyltr_aTrm56"/>
    <property type="match status" value="1"/>
</dbReference>
<dbReference type="InterPro" id="IPR029028">
    <property type="entry name" value="Alpha/beta_knot_MTases"/>
</dbReference>
<dbReference type="InterPro" id="IPR029026">
    <property type="entry name" value="tRNA_m1G_MTases_N"/>
</dbReference>
<dbReference type="InterPro" id="IPR002845">
    <property type="entry name" value="tRNA_mtfrase_aTrm56"/>
</dbReference>
<dbReference type="NCBIfam" id="NF003048">
    <property type="entry name" value="PRK03958.1"/>
    <property type="match status" value="1"/>
</dbReference>
<dbReference type="PANTHER" id="PTHR42197">
    <property type="entry name" value="TRNA (CYTIDINE(56)-2'-O)-METHYLTRANSFERASE"/>
    <property type="match status" value="1"/>
</dbReference>
<dbReference type="PANTHER" id="PTHR42197:SF1">
    <property type="entry name" value="TRNA (CYTIDINE(56)-2'-O)-METHYLTRANSFERASE"/>
    <property type="match status" value="1"/>
</dbReference>
<dbReference type="Pfam" id="PF01994">
    <property type="entry name" value="Trm56"/>
    <property type="match status" value="1"/>
</dbReference>
<dbReference type="PIRSF" id="PIRSF016123">
    <property type="entry name" value="UCP016123"/>
    <property type="match status" value="1"/>
</dbReference>
<dbReference type="SUPFAM" id="SSF75217">
    <property type="entry name" value="alpha/beta knot"/>
    <property type="match status" value="1"/>
</dbReference>
<proteinExistence type="inferred from homology"/>
<comment type="function">
    <text evidence="1">Specifically catalyzes the AdoMet-dependent 2'-O-ribose methylation of cytidine at position 56 in tRNAs.</text>
</comment>
<comment type="catalytic activity">
    <reaction evidence="1">
        <text>cytidine(56) in tRNA + S-adenosyl-L-methionine = 2'-O-methylcytidine(56) in tRNA + S-adenosyl-L-homocysteine + H(+)</text>
        <dbReference type="Rhea" id="RHEA:42968"/>
        <dbReference type="Rhea" id="RHEA-COMP:10308"/>
        <dbReference type="Rhea" id="RHEA-COMP:10309"/>
        <dbReference type="ChEBI" id="CHEBI:15378"/>
        <dbReference type="ChEBI" id="CHEBI:57856"/>
        <dbReference type="ChEBI" id="CHEBI:59789"/>
        <dbReference type="ChEBI" id="CHEBI:74495"/>
        <dbReference type="ChEBI" id="CHEBI:82748"/>
        <dbReference type="EC" id="2.1.1.206"/>
    </reaction>
</comment>
<comment type="subunit">
    <text evidence="1">Homodimer.</text>
</comment>
<comment type="subcellular location">
    <subcellularLocation>
        <location evidence="1">Cytoplasm</location>
    </subcellularLocation>
</comment>
<comment type="similarity">
    <text evidence="1">Belongs to the aTrm56 family.</text>
</comment>